<dbReference type="SMR" id="Q99283"/>
<dbReference type="GO" id="GO:0000786">
    <property type="term" value="C:nucleosome"/>
    <property type="evidence" value="ECO:0007669"/>
    <property type="project" value="InterPro"/>
</dbReference>
<dbReference type="GO" id="GO:0005634">
    <property type="term" value="C:nucleus"/>
    <property type="evidence" value="ECO:0007669"/>
    <property type="project" value="UniProtKB-SubCell"/>
</dbReference>
<dbReference type="GO" id="GO:0003677">
    <property type="term" value="F:DNA binding"/>
    <property type="evidence" value="ECO:0007669"/>
    <property type="project" value="UniProtKB-KW"/>
</dbReference>
<dbReference type="GO" id="GO:0006334">
    <property type="term" value="P:nucleosome assembly"/>
    <property type="evidence" value="ECO:0007669"/>
    <property type="project" value="InterPro"/>
</dbReference>
<dbReference type="Gene3D" id="1.10.10.10">
    <property type="entry name" value="Winged helix-like DNA-binding domain superfamily/Winged helix DNA-binding domain"/>
    <property type="match status" value="1"/>
</dbReference>
<dbReference type="InterPro" id="IPR005818">
    <property type="entry name" value="Histone_H1/H5_H15"/>
</dbReference>
<dbReference type="InterPro" id="IPR036388">
    <property type="entry name" value="WH-like_DNA-bd_sf"/>
</dbReference>
<dbReference type="InterPro" id="IPR036390">
    <property type="entry name" value="WH_DNA-bd_sf"/>
</dbReference>
<dbReference type="Pfam" id="PF00538">
    <property type="entry name" value="Linker_histone"/>
    <property type="match status" value="1"/>
</dbReference>
<dbReference type="SUPFAM" id="SSF46785">
    <property type="entry name" value="Winged helix' DNA-binding domain"/>
    <property type="match status" value="1"/>
</dbReference>
<dbReference type="PROSITE" id="PS51504">
    <property type="entry name" value="H15"/>
    <property type="match status" value="1"/>
</dbReference>
<accession>Q99283</accession>
<proteinExistence type="evidence at protein level"/>
<keyword id="KW-0158">Chromosome</keyword>
<keyword id="KW-0903">Direct protein sequencing</keyword>
<keyword id="KW-0238">DNA-binding</keyword>
<keyword id="KW-0539">Nucleus</keyword>
<comment type="function">
    <text>Histones H1 are necessary for the condensation of nucleosome chains into higher-order structures.</text>
</comment>
<comment type="subcellular location">
    <subcellularLocation>
        <location evidence="4">Nucleus</location>
    </subcellularLocation>
    <subcellularLocation>
        <location>Chromosome</location>
    </subcellularLocation>
</comment>
<comment type="similarity">
    <text evidence="1">Belongs to the histone H1/H5 family.</text>
</comment>
<name>H13E_PARAN</name>
<evidence type="ECO:0000255" key="1">
    <source>
        <dbReference type="PROSITE-ProRule" id="PRU00837"/>
    </source>
</evidence>
<evidence type="ECO:0000269" key="2">
    <source>
    </source>
</evidence>
<evidence type="ECO:0000303" key="3">
    <source>
    </source>
</evidence>
<evidence type="ECO:0000305" key="4"/>
<sequence>HVVAAITALKERGGSSHQALKKYKAAN</sequence>
<feature type="chain" id="PRO_0000273526" description="Histone H1.3, embryonic">
    <location>
        <begin position="1" status="less than"/>
        <end position="27" status="greater than"/>
    </location>
</feature>
<feature type="domain" description="H15" evidence="1">
    <location>
        <begin position="1"/>
        <end position="27"/>
    </location>
</feature>
<feature type="non-terminal residue" evidence="3">
    <location>
        <position position="1"/>
    </location>
</feature>
<feature type="non-terminal residue" evidence="3">
    <location>
        <position position="27"/>
    </location>
</feature>
<organism>
    <name type="scientific">Parechinus angulosus</name>
    <name type="common">Angulate sea urchin</name>
    <name type="synonym">Cidaris angulosus</name>
    <dbReference type="NCBI Taxonomy" id="7658"/>
    <lineage>
        <taxon>Eukaryota</taxon>
        <taxon>Metazoa</taxon>
        <taxon>Echinodermata</taxon>
        <taxon>Eleutherozoa</taxon>
        <taxon>Echinozoa</taxon>
        <taxon>Echinoidea</taxon>
        <taxon>Euechinoidea</taxon>
        <taxon>Echinacea</taxon>
        <taxon>Camarodonta</taxon>
        <taxon>Echinidea</taxon>
        <taxon>Echinidae</taxon>
        <taxon>Parechinus</taxon>
    </lineage>
</organism>
<reference evidence="4" key="1">
    <citation type="journal article" date="1983" name="Biochim. Biophys. Acta">
        <title>The identification by sequence homology of stage-specific sea urchin embryo histones H1.</title>
        <authorList>
            <person name="de Groot P."/>
            <person name="Strickland W.N."/>
            <person name="Brandt W.F."/>
            <person name="von Holt C."/>
        </authorList>
    </citation>
    <scope>PROTEIN SEQUENCE</scope>
    <source>
        <tissue evidence="2">Embryo</tissue>
    </source>
</reference>
<protein>
    <recommendedName>
        <fullName>Histone H1.3, embryonic</fullName>
    </recommendedName>
</protein>